<sequence length="501" mass="56124">MKKRALISVFDKDGVLELAKFLRDRDVEIISSGGTYKYLKENNIEVKEISEITDFPEMLDGRVKTLHPLVHAGILAIRDNKEHMKTLEEREINTIDYVVVNLYPFFEKVRENLSFEEKVEFIDIGGPTMLRAAAKNFKDVVVLSDKKDYEKVMNEIKENNCVSFKLRKTLAGKVFNLMSAYDAAISNFLLEGEEEYPEYLSVSYKKIQDLRYGENPHQGAAYYSSTEFDGAMNSFEILNGKALSYNNIKDLDIAWKVACEFEETACCALKHNTPCGVAVGENSKEVYLKAYDADPVSIFGGIVAINRKIDKATAEEMVKIFLEVVAAPDFDEDALEVLRTKKNLRVIKCKNTPQAKNYMVTVDGGILVQGEDNKLANEYKVVTEKEPTEMELRDMIFGMKVVKYVKSNAIVVVKDGVATGIGGGQVNRIWATKEALERGKGGAVLASDAFFPFRDCVDEAAKNGIKAIIQPGGSIRDEESIEACNEHGISMVFTGVRHFKH</sequence>
<evidence type="ECO:0000255" key="1">
    <source>
        <dbReference type="HAMAP-Rule" id="MF_00139"/>
    </source>
</evidence>
<evidence type="ECO:0000255" key="2">
    <source>
        <dbReference type="PROSITE-ProRule" id="PRU01202"/>
    </source>
</evidence>
<feature type="chain" id="PRO_1000018880" description="Bifunctional purine biosynthesis protein PurH">
    <location>
        <begin position="1"/>
        <end position="501"/>
    </location>
</feature>
<feature type="domain" description="MGS-like" evidence="2">
    <location>
        <begin position="1"/>
        <end position="144"/>
    </location>
</feature>
<name>PUR9_CLOP1</name>
<proteinExistence type="inferred from homology"/>
<protein>
    <recommendedName>
        <fullName evidence="1">Bifunctional purine biosynthesis protein PurH</fullName>
    </recommendedName>
    <domain>
        <recommendedName>
            <fullName evidence="1">Phosphoribosylaminoimidazolecarboxamide formyltransferase</fullName>
            <ecNumber evidence="1">2.1.2.3</ecNumber>
        </recommendedName>
        <alternativeName>
            <fullName evidence="1">AICAR transformylase</fullName>
        </alternativeName>
    </domain>
    <domain>
        <recommendedName>
            <fullName evidence="1">IMP cyclohydrolase</fullName>
            <ecNumber evidence="1">3.5.4.10</ecNumber>
        </recommendedName>
        <alternativeName>
            <fullName evidence="1">ATIC</fullName>
        </alternativeName>
        <alternativeName>
            <fullName evidence="1">IMP synthase</fullName>
        </alternativeName>
        <alternativeName>
            <fullName evidence="1">Inosinicase</fullName>
        </alternativeName>
    </domain>
</protein>
<organism>
    <name type="scientific">Clostridium perfringens (strain ATCC 13124 / DSM 756 / JCM 1290 / NCIMB 6125 / NCTC 8237 / Type A)</name>
    <dbReference type="NCBI Taxonomy" id="195103"/>
    <lineage>
        <taxon>Bacteria</taxon>
        <taxon>Bacillati</taxon>
        <taxon>Bacillota</taxon>
        <taxon>Clostridia</taxon>
        <taxon>Eubacteriales</taxon>
        <taxon>Clostridiaceae</taxon>
        <taxon>Clostridium</taxon>
    </lineage>
</organism>
<keyword id="KW-0378">Hydrolase</keyword>
<keyword id="KW-0511">Multifunctional enzyme</keyword>
<keyword id="KW-0658">Purine biosynthesis</keyword>
<keyword id="KW-0808">Transferase</keyword>
<dbReference type="EC" id="2.1.2.3" evidence="1"/>
<dbReference type="EC" id="3.5.4.10" evidence="1"/>
<dbReference type="EMBL" id="CP000246">
    <property type="protein sequence ID" value="ABG83187.1"/>
    <property type="molecule type" value="Genomic_DNA"/>
</dbReference>
<dbReference type="RefSeq" id="WP_011590302.1">
    <property type="nucleotide sequence ID" value="NC_008261.1"/>
</dbReference>
<dbReference type="SMR" id="Q0TTB0"/>
<dbReference type="STRING" id="195103.CPF_0677"/>
<dbReference type="PaxDb" id="195103-CPF_0677"/>
<dbReference type="GeneID" id="93002977"/>
<dbReference type="KEGG" id="cpf:CPF_0677"/>
<dbReference type="eggNOG" id="COG0138">
    <property type="taxonomic scope" value="Bacteria"/>
</dbReference>
<dbReference type="HOGENOM" id="CLU_016316_5_2_9"/>
<dbReference type="UniPathway" id="UPA00074">
    <property type="reaction ID" value="UER00133"/>
</dbReference>
<dbReference type="UniPathway" id="UPA00074">
    <property type="reaction ID" value="UER00135"/>
</dbReference>
<dbReference type="Proteomes" id="UP000001823">
    <property type="component" value="Chromosome"/>
</dbReference>
<dbReference type="GO" id="GO:0005829">
    <property type="term" value="C:cytosol"/>
    <property type="evidence" value="ECO:0007669"/>
    <property type="project" value="TreeGrafter"/>
</dbReference>
<dbReference type="GO" id="GO:0003937">
    <property type="term" value="F:IMP cyclohydrolase activity"/>
    <property type="evidence" value="ECO:0007669"/>
    <property type="project" value="UniProtKB-UniRule"/>
</dbReference>
<dbReference type="GO" id="GO:0004643">
    <property type="term" value="F:phosphoribosylaminoimidazolecarboxamide formyltransferase activity"/>
    <property type="evidence" value="ECO:0007669"/>
    <property type="project" value="UniProtKB-UniRule"/>
</dbReference>
<dbReference type="GO" id="GO:0006189">
    <property type="term" value="P:'de novo' IMP biosynthetic process"/>
    <property type="evidence" value="ECO:0007669"/>
    <property type="project" value="UniProtKB-UniRule"/>
</dbReference>
<dbReference type="CDD" id="cd01421">
    <property type="entry name" value="IMPCH"/>
    <property type="match status" value="1"/>
</dbReference>
<dbReference type="FunFam" id="3.40.140.20:FF:000001">
    <property type="entry name" value="Bifunctional purine biosynthesis protein PurH"/>
    <property type="match status" value="1"/>
</dbReference>
<dbReference type="FunFam" id="3.40.140.20:FF:000002">
    <property type="entry name" value="Bifunctional purine biosynthesis protein PurH"/>
    <property type="match status" value="1"/>
</dbReference>
<dbReference type="FunFam" id="3.40.50.1380:FF:000001">
    <property type="entry name" value="Bifunctional purine biosynthesis protein PurH"/>
    <property type="match status" value="1"/>
</dbReference>
<dbReference type="Gene3D" id="3.40.140.20">
    <property type="match status" value="2"/>
</dbReference>
<dbReference type="Gene3D" id="3.40.50.1380">
    <property type="entry name" value="Methylglyoxal synthase-like domain"/>
    <property type="match status" value="1"/>
</dbReference>
<dbReference type="HAMAP" id="MF_00139">
    <property type="entry name" value="PurH"/>
    <property type="match status" value="1"/>
</dbReference>
<dbReference type="InterPro" id="IPR024051">
    <property type="entry name" value="AICAR_Tfase_dup_dom_sf"/>
</dbReference>
<dbReference type="InterPro" id="IPR016193">
    <property type="entry name" value="Cytidine_deaminase-like"/>
</dbReference>
<dbReference type="InterPro" id="IPR011607">
    <property type="entry name" value="MGS-like_dom"/>
</dbReference>
<dbReference type="InterPro" id="IPR036914">
    <property type="entry name" value="MGS-like_dom_sf"/>
</dbReference>
<dbReference type="InterPro" id="IPR002695">
    <property type="entry name" value="PurH-like"/>
</dbReference>
<dbReference type="NCBIfam" id="NF002049">
    <property type="entry name" value="PRK00881.1"/>
    <property type="match status" value="1"/>
</dbReference>
<dbReference type="NCBIfam" id="TIGR00355">
    <property type="entry name" value="purH"/>
    <property type="match status" value="1"/>
</dbReference>
<dbReference type="PANTHER" id="PTHR11692:SF0">
    <property type="entry name" value="BIFUNCTIONAL PURINE BIOSYNTHESIS PROTEIN ATIC"/>
    <property type="match status" value="1"/>
</dbReference>
<dbReference type="PANTHER" id="PTHR11692">
    <property type="entry name" value="BIFUNCTIONAL PURINE BIOSYNTHESIS PROTEIN PURH"/>
    <property type="match status" value="1"/>
</dbReference>
<dbReference type="Pfam" id="PF01808">
    <property type="entry name" value="AICARFT_IMPCHas"/>
    <property type="match status" value="1"/>
</dbReference>
<dbReference type="Pfam" id="PF02142">
    <property type="entry name" value="MGS"/>
    <property type="match status" value="1"/>
</dbReference>
<dbReference type="PIRSF" id="PIRSF000414">
    <property type="entry name" value="AICARFT_IMPCHas"/>
    <property type="match status" value="1"/>
</dbReference>
<dbReference type="SMART" id="SM00798">
    <property type="entry name" value="AICARFT_IMPCHas"/>
    <property type="match status" value="1"/>
</dbReference>
<dbReference type="SMART" id="SM00851">
    <property type="entry name" value="MGS"/>
    <property type="match status" value="1"/>
</dbReference>
<dbReference type="SUPFAM" id="SSF53927">
    <property type="entry name" value="Cytidine deaminase-like"/>
    <property type="match status" value="1"/>
</dbReference>
<dbReference type="SUPFAM" id="SSF52335">
    <property type="entry name" value="Methylglyoxal synthase-like"/>
    <property type="match status" value="1"/>
</dbReference>
<dbReference type="PROSITE" id="PS51855">
    <property type="entry name" value="MGS"/>
    <property type="match status" value="1"/>
</dbReference>
<comment type="catalytic activity">
    <reaction evidence="1">
        <text>(6R)-10-formyltetrahydrofolate + 5-amino-1-(5-phospho-beta-D-ribosyl)imidazole-4-carboxamide = 5-formamido-1-(5-phospho-D-ribosyl)imidazole-4-carboxamide + (6S)-5,6,7,8-tetrahydrofolate</text>
        <dbReference type="Rhea" id="RHEA:22192"/>
        <dbReference type="ChEBI" id="CHEBI:57453"/>
        <dbReference type="ChEBI" id="CHEBI:58467"/>
        <dbReference type="ChEBI" id="CHEBI:58475"/>
        <dbReference type="ChEBI" id="CHEBI:195366"/>
        <dbReference type="EC" id="2.1.2.3"/>
    </reaction>
</comment>
<comment type="catalytic activity">
    <reaction evidence="1">
        <text>IMP + H2O = 5-formamido-1-(5-phospho-D-ribosyl)imidazole-4-carboxamide</text>
        <dbReference type="Rhea" id="RHEA:18445"/>
        <dbReference type="ChEBI" id="CHEBI:15377"/>
        <dbReference type="ChEBI" id="CHEBI:58053"/>
        <dbReference type="ChEBI" id="CHEBI:58467"/>
        <dbReference type="EC" id="3.5.4.10"/>
    </reaction>
</comment>
<comment type="pathway">
    <text evidence="1">Purine metabolism; IMP biosynthesis via de novo pathway; 5-formamido-1-(5-phospho-D-ribosyl)imidazole-4-carboxamide from 5-amino-1-(5-phospho-D-ribosyl)imidazole-4-carboxamide (10-formyl THF route): step 1/1.</text>
</comment>
<comment type="pathway">
    <text evidence="1">Purine metabolism; IMP biosynthesis via de novo pathway; IMP from 5-formamido-1-(5-phospho-D-ribosyl)imidazole-4-carboxamide: step 1/1.</text>
</comment>
<comment type="domain">
    <text evidence="1">The IMP cyclohydrolase activity resides in the N-terminal region.</text>
</comment>
<comment type="similarity">
    <text evidence="1">Belongs to the PurH family.</text>
</comment>
<accession>Q0TTB0</accession>
<reference key="1">
    <citation type="journal article" date="2006" name="Genome Res.">
        <title>Skewed genomic variability in strains of the toxigenic bacterial pathogen, Clostridium perfringens.</title>
        <authorList>
            <person name="Myers G.S.A."/>
            <person name="Rasko D.A."/>
            <person name="Cheung J.K."/>
            <person name="Ravel J."/>
            <person name="Seshadri R."/>
            <person name="DeBoy R.T."/>
            <person name="Ren Q."/>
            <person name="Varga J."/>
            <person name="Awad M.M."/>
            <person name="Brinkac L.M."/>
            <person name="Daugherty S.C."/>
            <person name="Haft D.H."/>
            <person name="Dodson R.J."/>
            <person name="Madupu R."/>
            <person name="Nelson W.C."/>
            <person name="Rosovitz M.J."/>
            <person name="Sullivan S.A."/>
            <person name="Khouri H."/>
            <person name="Dimitrov G.I."/>
            <person name="Watkins K.L."/>
            <person name="Mulligan S."/>
            <person name="Benton J."/>
            <person name="Radune D."/>
            <person name="Fisher D.J."/>
            <person name="Atkins H.S."/>
            <person name="Hiscox T."/>
            <person name="Jost B.H."/>
            <person name="Billington S.J."/>
            <person name="Songer J.G."/>
            <person name="McClane B.A."/>
            <person name="Titball R.W."/>
            <person name="Rood J.I."/>
            <person name="Melville S.B."/>
            <person name="Paulsen I.T."/>
        </authorList>
    </citation>
    <scope>NUCLEOTIDE SEQUENCE [LARGE SCALE GENOMIC DNA]</scope>
    <source>
        <strain>ATCC 13124 / DSM 756 / JCM 1290 / NCIMB 6125 / NCTC 8237 / S 107 / Type A</strain>
    </source>
</reference>
<gene>
    <name evidence="1" type="primary">purH</name>
    <name type="ordered locus">CPF_0677</name>
</gene>